<name>BSPH1_HUMAN</name>
<dbReference type="EMBL" id="DQ227497">
    <property type="protein sequence ID" value="ABB71591.1"/>
    <property type="molecule type" value="mRNA"/>
</dbReference>
<dbReference type="EMBL" id="AC010330">
    <property type="status" value="NOT_ANNOTATED_CDS"/>
    <property type="molecule type" value="Genomic_DNA"/>
</dbReference>
<dbReference type="CCDS" id="CCDS46135.1"/>
<dbReference type="RefSeq" id="NP_001121798.1">
    <property type="nucleotide sequence ID" value="NM_001128326.2"/>
</dbReference>
<dbReference type="RefSeq" id="XP_016881607.1">
    <property type="nucleotide sequence ID" value="XM_017026118.1"/>
</dbReference>
<dbReference type="RefSeq" id="XP_054175435.1">
    <property type="nucleotide sequence ID" value="XM_054319460.1"/>
</dbReference>
<dbReference type="SMR" id="Q075Z2"/>
<dbReference type="STRING" id="9606.ENSP00000341762"/>
<dbReference type="GlyCosmos" id="Q075Z2">
    <property type="glycosylation" value="1 site, No reported glycans"/>
</dbReference>
<dbReference type="GlyGen" id="Q075Z2">
    <property type="glycosylation" value="1 site"/>
</dbReference>
<dbReference type="iPTMnet" id="Q075Z2"/>
<dbReference type="PhosphoSitePlus" id="Q075Z2"/>
<dbReference type="BioMuta" id="BSPH1"/>
<dbReference type="DMDM" id="121939964"/>
<dbReference type="MassIVE" id="Q075Z2"/>
<dbReference type="PaxDb" id="9606-ENSP00000341762"/>
<dbReference type="PeptideAtlas" id="Q075Z2"/>
<dbReference type="ProteomicsDB" id="58519"/>
<dbReference type="Antibodypedia" id="70932">
    <property type="antibodies" value="4 antibodies from 4 providers"/>
</dbReference>
<dbReference type="DNASU" id="100131137"/>
<dbReference type="Ensembl" id="ENST00000344839.3">
    <property type="protein sequence ID" value="ENSP00000341762.3"/>
    <property type="gene ID" value="ENSG00000188334.3"/>
</dbReference>
<dbReference type="GeneID" id="100131137"/>
<dbReference type="KEGG" id="hsa:100131137"/>
<dbReference type="MANE-Select" id="ENST00000344839.3">
    <property type="protein sequence ID" value="ENSP00000341762.3"/>
    <property type="RefSeq nucleotide sequence ID" value="NM_001128326.2"/>
    <property type="RefSeq protein sequence ID" value="NP_001121798.1"/>
</dbReference>
<dbReference type="UCSC" id="uc002phs.1">
    <property type="organism name" value="human"/>
</dbReference>
<dbReference type="AGR" id="HGNC:33906"/>
<dbReference type="CTD" id="100131137"/>
<dbReference type="DisGeNET" id="100131137"/>
<dbReference type="GeneCards" id="BSPH1"/>
<dbReference type="HGNC" id="HGNC:33906">
    <property type="gene designation" value="BSPH1"/>
</dbReference>
<dbReference type="HPA" id="ENSG00000188334">
    <property type="expression patterns" value="Tissue enriched (epididymis)"/>
</dbReference>
<dbReference type="MIM" id="612213">
    <property type="type" value="gene"/>
</dbReference>
<dbReference type="neXtProt" id="NX_Q075Z2"/>
<dbReference type="OpenTargets" id="ENSG00000188334"/>
<dbReference type="PharmGKB" id="PA164716709"/>
<dbReference type="VEuPathDB" id="HostDB:ENSG00000188334"/>
<dbReference type="eggNOG" id="KOG1565">
    <property type="taxonomic scope" value="Eukaryota"/>
</dbReference>
<dbReference type="GeneTree" id="ENSGT00940000163003"/>
<dbReference type="HOGENOM" id="CLU_126630_1_0_1"/>
<dbReference type="InParanoid" id="Q075Z2"/>
<dbReference type="OMA" id="DGIFYDC"/>
<dbReference type="OrthoDB" id="5987067at2759"/>
<dbReference type="PAN-GO" id="Q075Z2">
    <property type="GO annotations" value="3 GO annotations based on evolutionary models"/>
</dbReference>
<dbReference type="PhylomeDB" id="Q075Z2"/>
<dbReference type="TreeFam" id="TF343543"/>
<dbReference type="PathwayCommons" id="Q075Z2"/>
<dbReference type="BioGRID-ORCS" id="100131137">
    <property type="hits" value="16 hits in 1139 CRISPR screens"/>
</dbReference>
<dbReference type="GenomeRNAi" id="100131137"/>
<dbReference type="Pharos" id="Q075Z2">
    <property type="development level" value="Tdark"/>
</dbReference>
<dbReference type="PRO" id="PR:Q075Z2"/>
<dbReference type="Proteomes" id="UP000005640">
    <property type="component" value="Chromosome 19"/>
</dbReference>
<dbReference type="RNAct" id="Q075Z2">
    <property type="molecule type" value="protein"/>
</dbReference>
<dbReference type="Bgee" id="ENSG00000188334">
    <property type="expression patterns" value="Expressed in primordial germ cell in gonad and 10 other cell types or tissues"/>
</dbReference>
<dbReference type="GO" id="GO:0009986">
    <property type="term" value="C:cell surface"/>
    <property type="evidence" value="ECO:0000318"/>
    <property type="project" value="GO_Central"/>
</dbReference>
<dbReference type="GO" id="GO:0005576">
    <property type="term" value="C:extracellular region"/>
    <property type="evidence" value="ECO:0007669"/>
    <property type="project" value="UniProtKB-SubCell"/>
</dbReference>
<dbReference type="GO" id="GO:0008201">
    <property type="term" value="F:heparin binding"/>
    <property type="evidence" value="ECO:0000318"/>
    <property type="project" value="GO_Central"/>
</dbReference>
<dbReference type="GO" id="GO:0007338">
    <property type="term" value="P:single fertilization"/>
    <property type="evidence" value="ECO:0007669"/>
    <property type="project" value="UniProtKB-KW"/>
</dbReference>
<dbReference type="GO" id="GO:0048240">
    <property type="term" value="P:sperm capacitation"/>
    <property type="evidence" value="ECO:0000318"/>
    <property type="project" value="GO_Central"/>
</dbReference>
<dbReference type="CDD" id="cd00062">
    <property type="entry name" value="FN2"/>
    <property type="match status" value="1"/>
</dbReference>
<dbReference type="FunFam" id="2.10.10.10:FF:000003">
    <property type="entry name" value="binder of sperm protein homolog 1"/>
    <property type="match status" value="1"/>
</dbReference>
<dbReference type="FunFam" id="2.10.10.10:FF:000005">
    <property type="entry name" value="Epididymal sperm binding protein 1"/>
    <property type="match status" value="1"/>
</dbReference>
<dbReference type="Gene3D" id="2.10.10.10">
    <property type="entry name" value="Fibronectin, type II, collagen-binding"/>
    <property type="match status" value="2"/>
</dbReference>
<dbReference type="InterPro" id="IPR000562">
    <property type="entry name" value="FN_type2_dom"/>
</dbReference>
<dbReference type="InterPro" id="IPR036943">
    <property type="entry name" value="FN_type2_sf"/>
</dbReference>
<dbReference type="InterPro" id="IPR013806">
    <property type="entry name" value="Kringle-like"/>
</dbReference>
<dbReference type="InterPro" id="IPR051666">
    <property type="entry name" value="SP_Capacitation_Regulator"/>
</dbReference>
<dbReference type="PANTHER" id="PTHR22918:SF4">
    <property type="entry name" value="BINDER OF SPERM PROTEIN HOMOLOG 1"/>
    <property type="match status" value="1"/>
</dbReference>
<dbReference type="PANTHER" id="PTHR22918">
    <property type="entry name" value="SEMINAL PLASMA PROTEIN"/>
    <property type="match status" value="1"/>
</dbReference>
<dbReference type="Pfam" id="PF00040">
    <property type="entry name" value="fn2"/>
    <property type="match status" value="2"/>
</dbReference>
<dbReference type="PRINTS" id="PR00013">
    <property type="entry name" value="FNTYPEII"/>
</dbReference>
<dbReference type="SMART" id="SM00059">
    <property type="entry name" value="FN2"/>
    <property type="match status" value="2"/>
</dbReference>
<dbReference type="SUPFAM" id="SSF57440">
    <property type="entry name" value="Kringle-like"/>
    <property type="match status" value="2"/>
</dbReference>
<dbReference type="PROSITE" id="PS00023">
    <property type="entry name" value="FN2_1"/>
    <property type="match status" value="1"/>
</dbReference>
<dbReference type="PROSITE" id="PS51092">
    <property type="entry name" value="FN2_2"/>
    <property type="match status" value="2"/>
</dbReference>
<gene>
    <name type="primary">BSPH1</name>
</gene>
<keyword id="KW-1015">Disulfide bond</keyword>
<keyword id="KW-0278">Fertilization</keyword>
<keyword id="KW-0325">Glycoprotein</keyword>
<keyword id="KW-1267">Proteomics identification</keyword>
<keyword id="KW-1185">Reference proteome</keyword>
<keyword id="KW-0677">Repeat</keyword>
<keyword id="KW-0964">Secreted</keyword>
<keyword id="KW-0732">Signal</keyword>
<proteinExistence type="evidence at protein level"/>
<feature type="signal peptide" evidence="2">
    <location>
        <begin position="1"/>
        <end position="17"/>
    </location>
</feature>
<feature type="chain" id="PRO_0000326156" description="Binder of sperm protein homolog 1">
    <location>
        <begin position="18"/>
        <end position="132"/>
    </location>
</feature>
<feature type="domain" description="Fibronectin type-II 1" evidence="3">
    <location>
        <begin position="40"/>
        <end position="84"/>
    </location>
</feature>
<feature type="domain" description="Fibronectin type-II 2" evidence="3">
    <location>
        <begin position="85"/>
        <end position="132"/>
    </location>
</feature>
<feature type="glycosylation site" description="N-linked (GlcNAc...) asparagine" evidence="2">
    <location>
        <position position="53"/>
    </location>
</feature>
<feature type="disulfide bond" evidence="3">
    <location>
        <begin position="45"/>
        <end position="69"/>
    </location>
</feature>
<feature type="disulfide bond" evidence="3">
    <location>
        <begin position="59"/>
        <end position="82"/>
    </location>
</feature>
<feature type="disulfide bond" evidence="3">
    <location>
        <begin position="90"/>
        <end position="116"/>
    </location>
</feature>
<feature type="disulfide bond" evidence="3">
    <location>
        <begin position="104"/>
        <end position="131"/>
    </location>
</feature>
<sequence length="132" mass="15693">MGSLMLLFVETTRNSSACIFPVILNELSSTVETITHFPEVTDGECVFPFHYKNGTYYDCIKSKARHKWCSLNKTYEGYWKFCSAEDFANCVFPFWYRRLIYWECTDDGEAFGKKWCSLTKNFNKDRIWKYCE</sequence>
<comment type="function">
    <text evidence="1">Binds sperm in vitro and promotes sperm capacitation. Specifically promotes capacitation induced by high density lipoproteins (HDLs). Also binds heparin, phospholipid liposomes, and weakly to gelatin. Does not bind chondroitin sulfate B.</text>
</comment>
<comment type="subcellular location">
    <subcellularLocation>
        <location evidence="5">Secreted</location>
    </subcellularLocation>
</comment>
<comment type="tissue specificity">
    <text evidence="4">Expressed only in the epididymis.</text>
</comment>
<comment type="similarity">
    <text evidence="5">Belongs to the seminal plasma protein family.</text>
</comment>
<reference key="1">
    <citation type="journal article" date="2007" name="Mol. Hum. Reprod.">
        <title>Genomic structure and tissue-specific expression of human and mouse genes encoding homologues of the major bovine seminal plasma proteins.</title>
        <authorList>
            <person name="Lefebvre J."/>
            <person name="Fan J."/>
            <person name="Chevalier S."/>
            <person name="Sullivan R."/>
            <person name="Carmona E."/>
            <person name="Manjunath P."/>
        </authorList>
    </citation>
    <scope>NUCLEOTIDE SEQUENCE [MRNA]</scope>
    <scope>TISSUE SPECIFICITY</scope>
    <source>
        <tissue>Epididymis</tissue>
    </source>
</reference>
<reference key="2">
    <citation type="journal article" date="2004" name="Nature">
        <title>The DNA sequence and biology of human chromosome 19.</title>
        <authorList>
            <person name="Grimwood J."/>
            <person name="Gordon L.A."/>
            <person name="Olsen A.S."/>
            <person name="Terry A."/>
            <person name="Schmutz J."/>
            <person name="Lamerdin J.E."/>
            <person name="Hellsten U."/>
            <person name="Goodstein D."/>
            <person name="Couronne O."/>
            <person name="Tran-Gyamfi M."/>
            <person name="Aerts A."/>
            <person name="Altherr M."/>
            <person name="Ashworth L."/>
            <person name="Bajorek E."/>
            <person name="Black S."/>
            <person name="Branscomb E."/>
            <person name="Caenepeel S."/>
            <person name="Carrano A.V."/>
            <person name="Caoile C."/>
            <person name="Chan Y.M."/>
            <person name="Christensen M."/>
            <person name="Cleland C.A."/>
            <person name="Copeland A."/>
            <person name="Dalin E."/>
            <person name="Dehal P."/>
            <person name="Denys M."/>
            <person name="Detter J.C."/>
            <person name="Escobar J."/>
            <person name="Flowers D."/>
            <person name="Fotopulos D."/>
            <person name="Garcia C."/>
            <person name="Georgescu A.M."/>
            <person name="Glavina T."/>
            <person name="Gomez M."/>
            <person name="Gonzales E."/>
            <person name="Groza M."/>
            <person name="Hammon N."/>
            <person name="Hawkins T."/>
            <person name="Haydu L."/>
            <person name="Ho I."/>
            <person name="Huang W."/>
            <person name="Israni S."/>
            <person name="Jett J."/>
            <person name="Kadner K."/>
            <person name="Kimball H."/>
            <person name="Kobayashi A."/>
            <person name="Larionov V."/>
            <person name="Leem S.-H."/>
            <person name="Lopez F."/>
            <person name="Lou Y."/>
            <person name="Lowry S."/>
            <person name="Malfatti S."/>
            <person name="Martinez D."/>
            <person name="McCready P.M."/>
            <person name="Medina C."/>
            <person name="Morgan J."/>
            <person name="Nelson K."/>
            <person name="Nolan M."/>
            <person name="Ovcharenko I."/>
            <person name="Pitluck S."/>
            <person name="Pollard M."/>
            <person name="Popkie A.P."/>
            <person name="Predki P."/>
            <person name="Quan G."/>
            <person name="Ramirez L."/>
            <person name="Rash S."/>
            <person name="Retterer J."/>
            <person name="Rodriguez A."/>
            <person name="Rogers S."/>
            <person name="Salamov A."/>
            <person name="Salazar A."/>
            <person name="She X."/>
            <person name="Smith D."/>
            <person name="Slezak T."/>
            <person name="Solovyev V."/>
            <person name="Thayer N."/>
            <person name="Tice H."/>
            <person name="Tsai M."/>
            <person name="Ustaszewska A."/>
            <person name="Vo N."/>
            <person name="Wagner M."/>
            <person name="Wheeler J."/>
            <person name="Wu K."/>
            <person name="Xie G."/>
            <person name="Yang J."/>
            <person name="Dubchak I."/>
            <person name="Furey T.S."/>
            <person name="DeJong P."/>
            <person name="Dickson M."/>
            <person name="Gordon D."/>
            <person name="Eichler E.E."/>
            <person name="Pennacchio L.A."/>
            <person name="Richardson P."/>
            <person name="Stubbs L."/>
            <person name="Rokhsar D.S."/>
            <person name="Myers R.M."/>
            <person name="Rubin E.M."/>
            <person name="Lucas S.M."/>
        </authorList>
    </citation>
    <scope>NUCLEOTIDE SEQUENCE [LARGE SCALE GENOMIC DNA]</scope>
</reference>
<evidence type="ECO:0000250" key="1">
    <source>
        <dbReference type="UniProtKB" id="Q3UW26"/>
    </source>
</evidence>
<evidence type="ECO:0000255" key="2"/>
<evidence type="ECO:0000255" key="3">
    <source>
        <dbReference type="PROSITE-ProRule" id="PRU00479"/>
    </source>
</evidence>
<evidence type="ECO:0000269" key="4">
    <source>
    </source>
</evidence>
<evidence type="ECO:0000305" key="5"/>
<organism>
    <name type="scientific">Homo sapiens</name>
    <name type="common">Human</name>
    <dbReference type="NCBI Taxonomy" id="9606"/>
    <lineage>
        <taxon>Eukaryota</taxon>
        <taxon>Metazoa</taxon>
        <taxon>Chordata</taxon>
        <taxon>Craniata</taxon>
        <taxon>Vertebrata</taxon>
        <taxon>Euteleostomi</taxon>
        <taxon>Mammalia</taxon>
        <taxon>Eutheria</taxon>
        <taxon>Euarchontoglires</taxon>
        <taxon>Primates</taxon>
        <taxon>Haplorrhini</taxon>
        <taxon>Catarrhini</taxon>
        <taxon>Hominidae</taxon>
        <taxon>Homo</taxon>
    </lineage>
</organism>
<accession>Q075Z2</accession>
<accession>A6NIZ5</accession>
<protein>
    <recommendedName>
        <fullName>Binder of sperm protein homolog 1</fullName>
    </recommendedName>
    <alternativeName>
        <fullName>Bovine seminal plasma protein homolog 1</fullName>
    </alternativeName>
    <alternativeName>
        <fullName>Bovine seminal plasma protein-like 1</fullName>
    </alternativeName>
</protein>